<dbReference type="EC" id="7.4.2.8" evidence="1"/>
<dbReference type="EMBL" id="Z67753">
    <property type="protein sequence ID" value="CAA91661.1"/>
    <property type="molecule type" value="Genomic_DNA"/>
</dbReference>
<dbReference type="PIR" id="S78288">
    <property type="entry name" value="S78288"/>
</dbReference>
<dbReference type="RefSeq" id="NP_043629.1">
    <property type="nucleotide sequence ID" value="NC_001713.1"/>
</dbReference>
<dbReference type="SMR" id="P49649"/>
<dbReference type="GeneID" id="801800"/>
<dbReference type="GO" id="GO:0009570">
    <property type="term" value="C:chloroplast stroma"/>
    <property type="evidence" value="ECO:0007669"/>
    <property type="project" value="UniProtKB-SubCell"/>
</dbReference>
<dbReference type="GO" id="GO:0009535">
    <property type="term" value="C:chloroplast thylakoid membrane"/>
    <property type="evidence" value="ECO:0007669"/>
    <property type="project" value="UniProtKB-SubCell"/>
</dbReference>
<dbReference type="GO" id="GO:0005524">
    <property type="term" value="F:ATP binding"/>
    <property type="evidence" value="ECO:0007669"/>
    <property type="project" value="UniProtKB-UniRule"/>
</dbReference>
<dbReference type="GO" id="GO:0008564">
    <property type="term" value="F:protein-exporting ATPase activity"/>
    <property type="evidence" value="ECO:0007669"/>
    <property type="project" value="UniProtKB-EC"/>
</dbReference>
<dbReference type="GO" id="GO:0065002">
    <property type="term" value="P:intracellular protein transmembrane transport"/>
    <property type="evidence" value="ECO:0007669"/>
    <property type="project" value="UniProtKB-UniRule"/>
</dbReference>
<dbReference type="GO" id="GO:0017038">
    <property type="term" value="P:protein import"/>
    <property type="evidence" value="ECO:0007669"/>
    <property type="project" value="InterPro"/>
</dbReference>
<dbReference type="GO" id="GO:0006605">
    <property type="term" value="P:protein targeting"/>
    <property type="evidence" value="ECO:0007669"/>
    <property type="project" value="UniProtKB-UniRule"/>
</dbReference>
<dbReference type="CDD" id="cd17928">
    <property type="entry name" value="DEXDc_SecA"/>
    <property type="match status" value="1"/>
</dbReference>
<dbReference type="CDD" id="cd18803">
    <property type="entry name" value="SF2_C_secA"/>
    <property type="match status" value="1"/>
</dbReference>
<dbReference type="FunFam" id="3.90.1440.10:FF:000003">
    <property type="entry name" value="Preprotein translocase SecA subunit"/>
    <property type="match status" value="1"/>
</dbReference>
<dbReference type="Gene3D" id="1.10.3060.10">
    <property type="entry name" value="Helical scaffold and wing domains of SecA"/>
    <property type="match status" value="1"/>
</dbReference>
<dbReference type="Gene3D" id="3.40.50.300">
    <property type="entry name" value="P-loop containing nucleotide triphosphate hydrolases"/>
    <property type="match status" value="2"/>
</dbReference>
<dbReference type="Gene3D" id="3.90.1440.10">
    <property type="entry name" value="SecA, preprotein cross-linking domain"/>
    <property type="match status" value="1"/>
</dbReference>
<dbReference type="HAMAP" id="MF_01382">
    <property type="entry name" value="SecA"/>
    <property type="match status" value="1"/>
</dbReference>
<dbReference type="InterPro" id="IPR014001">
    <property type="entry name" value="Helicase_ATP-bd"/>
</dbReference>
<dbReference type="InterPro" id="IPR027417">
    <property type="entry name" value="P-loop_NTPase"/>
</dbReference>
<dbReference type="InterPro" id="IPR000185">
    <property type="entry name" value="SecA"/>
</dbReference>
<dbReference type="InterPro" id="IPR020937">
    <property type="entry name" value="SecA_CS"/>
</dbReference>
<dbReference type="InterPro" id="IPR011115">
    <property type="entry name" value="SecA_DEAD"/>
</dbReference>
<dbReference type="InterPro" id="IPR014018">
    <property type="entry name" value="SecA_motor_DEAD"/>
</dbReference>
<dbReference type="InterPro" id="IPR011130">
    <property type="entry name" value="SecA_preprotein_X-link_dom"/>
</dbReference>
<dbReference type="InterPro" id="IPR044722">
    <property type="entry name" value="SecA_SF2_C"/>
</dbReference>
<dbReference type="InterPro" id="IPR011116">
    <property type="entry name" value="SecA_Wing/Scaffold"/>
</dbReference>
<dbReference type="InterPro" id="IPR036266">
    <property type="entry name" value="SecA_Wing/Scaffold_sf"/>
</dbReference>
<dbReference type="InterPro" id="IPR036670">
    <property type="entry name" value="SecA_X-link_sf"/>
</dbReference>
<dbReference type="NCBIfam" id="TIGR00963">
    <property type="entry name" value="secA"/>
    <property type="match status" value="1"/>
</dbReference>
<dbReference type="PANTHER" id="PTHR30612:SF0">
    <property type="entry name" value="CHLOROPLAST PROTEIN-TRANSPORTING ATPASE"/>
    <property type="match status" value="1"/>
</dbReference>
<dbReference type="PANTHER" id="PTHR30612">
    <property type="entry name" value="SECA INNER MEMBRANE COMPONENT OF SEC PROTEIN SECRETION SYSTEM"/>
    <property type="match status" value="1"/>
</dbReference>
<dbReference type="Pfam" id="PF21090">
    <property type="entry name" value="P-loop_SecA"/>
    <property type="match status" value="1"/>
</dbReference>
<dbReference type="Pfam" id="PF07517">
    <property type="entry name" value="SecA_DEAD"/>
    <property type="match status" value="1"/>
</dbReference>
<dbReference type="Pfam" id="PF01043">
    <property type="entry name" value="SecA_PP_bind"/>
    <property type="match status" value="1"/>
</dbReference>
<dbReference type="Pfam" id="PF07516">
    <property type="entry name" value="SecA_SW"/>
    <property type="match status" value="1"/>
</dbReference>
<dbReference type="PRINTS" id="PR00906">
    <property type="entry name" value="SECA"/>
</dbReference>
<dbReference type="SMART" id="SM00957">
    <property type="entry name" value="SecA_DEAD"/>
    <property type="match status" value="1"/>
</dbReference>
<dbReference type="SMART" id="SM00958">
    <property type="entry name" value="SecA_PP_bind"/>
    <property type="match status" value="1"/>
</dbReference>
<dbReference type="SUPFAM" id="SSF81886">
    <property type="entry name" value="Helical scaffold and wing domains of SecA"/>
    <property type="match status" value="1"/>
</dbReference>
<dbReference type="SUPFAM" id="SSF52540">
    <property type="entry name" value="P-loop containing nucleoside triphosphate hydrolases"/>
    <property type="match status" value="2"/>
</dbReference>
<dbReference type="SUPFAM" id="SSF81767">
    <property type="entry name" value="Pre-protein crosslinking domain of SecA"/>
    <property type="match status" value="1"/>
</dbReference>
<dbReference type="PROSITE" id="PS01312">
    <property type="entry name" value="SECA"/>
    <property type="match status" value="1"/>
</dbReference>
<dbReference type="PROSITE" id="PS51196">
    <property type="entry name" value="SECA_MOTOR_DEAD"/>
    <property type="match status" value="1"/>
</dbReference>
<reference key="1">
    <citation type="journal article" date="1995" name="Plant Mol. Biol. Rep.">
        <title>The chloroplast genome of a chlorophyll a+c-containing alga, Odontella sinensis.</title>
        <authorList>
            <person name="Kowallik K.V."/>
            <person name="Stoebe B."/>
            <person name="Schaffran I."/>
            <person name="Kroth-Pancic P."/>
            <person name="Freier U."/>
        </authorList>
    </citation>
    <scope>NUCLEOTIDE SEQUENCE [LARGE SCALE GENOMIC DNA]</scope>
</reference>
<proteinExistence type="inferred from homology"/>
<geneLocation type="chloroplast"/>
<sequence length="888" mass="102946">MLKNPFKKKSIADKYQTLIREINALESTVKTLTDGELRNKTNQLKQRYQDEQNLNNLIVESFALTREASYRTLGLRHFDVQLIGGLVLNGGKIAEMRTGEGKTLVATLPAYLNALTKKGVHIVTVNEYLASRDQTSMGQIYRFLGLETGLIQEKMTTPERQRNYKADITYVTNNELGFDYLRDNLALNIRDVFLRPFNYCIVDEVDSVLIDEALTPLIIANSVKTCVDKYIIASEITDYLELNVHFEIDEKNKSVLLTNQGTIQIEKILGVQDLYNPRDPWIPYVINAIRASSLFFRDVHYIVQNNRIVIVDEFTGRIMPDRRWRHGLHQAVEAKENVAIRQTTEITASITYQNFFLVYPKLSGMTGTAKTAEVEFDKIYSLPVEEIPTARPNLRQDLPDLIYKDEFSKWNAIAKECQNISLVKQPILIGTTTVEKSEMLAQLLQEYRLSHQILNAKPENVRRESEIVAQAGKKGSITIATNMAGRGTDIILGGNIQFKVRKDLYNILVTYKYQTKENKKDSLSRSLQIFPLLKKLQRTSQKFLTVLNCLINNKQFLNLSDVEVLKILNESELIRVPKISYQCSMKFLINELVNFEKKTQKLDNVIVKNLGGLYIIGTERNDSQRIDNQLRGRCGRQGDPGKSRFFLSVEDKLIRLFGDARLENVLKSQLLDDLPLESELVTKILDSAQKRVEERNYELRKNLFDYDDILNKQRNVVYYERRKVLESESARIKILAYGEQVISEITSKLRRKKVFGSQLISRIRNLLGTKFLLNFPSSDLNNLESIDFQTYLLQEFWLSYESKILELEVEYPGIIQEFERTLILIYMDREWKEHLQKMSLLRDAVGWRKYGQRNPLSEYKEDAYKLFKYRGIVTRHLVIYELLRSSIL</sequence>
<feature type="chain" id="PRO_0000109623" description="Protein translocase subunit SecA">
    <location>
        <begin position="1"/>
        <end position="888"/>
    </location>
</feature>
<feature type="binding site" evidence="1">
    <location>
        <position position="81"/>
    </location>
    <ligand>
        <name>ATP</name>
        <dbReference type="ChEBI" id="CHEBI:30616"/>
    </ligand>
</feature>
<feature type="binding site" evidence="1">
    <location>
        <begin position="99"/>
        <end position="103"/>
    </location>
    <ligand>
        <name>ATP</name>
        <dbReference type="ChEBI" id="CHEBI:30616"/>
    </ligand>
</feature>
<feature type="binding site" evidence="1">
    <location>
        <position position="489"/>
    </location>
    <ligand>
        <name>ATP</name>
        <dbReference type="ChEBI" id="CHEBI:30616"/>
    </ligand>
</feature>
<organism>
    <name type="scientific">Trieres chinensis</name>
    <name type="common">Marine centric diatom</name>
    <name type="synonym">Odontella sinensis</name>
    <dbReference type="NCBI Taxonomy" id="1514140"/>
    <lineage>
        <taxon>Eukaryota</taxon>
        <taxon>Sar</taxon>
        <taxon>Stramenopiles</taxon>
        <taxon>Ochrophyta</taxon>
        <taxon>Bacillariophyta</taxon>
        <taxon>Mediophyceae</taxon>
        <taxon>Biddulphiophycidae</taxon>
        <taxon>Eupodiscales</taxon>
        <taxon>Parodontellaceae</taxon>
        <taxon>Trieres</taxon>
    </lineage>
</organism>
<accession>P49649</accession>
<keyword id="KW-0067">ATP-binding</keyword>
<keyword id="KW-0150">Chloroplast</keyword>
<keyword id="KW-0472">Membrane</keyword>
<keyword id="KW-0547">Nucleotide-binding</keyword>
<keyword id="KW-0934">Plastid</keyword>
<keyword id="KW-0653">Protein transport</keyword>
<keyword id="KW-0793">Thylakoid</keyword>
<keyword id="KW-1278">Translocase</keyword>
<keyword id="KW-0811">Translocation</keyword>
<keyword id="KW-0813">Transport</keyword>
<comment type="function">
    <text evidence="1">Has a central role in coupling the hydrolysis of ATP to the transfer of proteins across the thylakoid membrane.</text>
</comment>
<comment type="catalytic activity">
    <reaction evidence="1">
        <text>ATP + H2O + cellular proteinSide 1 = ADP + phosphate + cellular proteinSide 2.</text>
        <dbReference type="EC" id="7.4.2.8"/>
    </reaction>
</comment>
<comment type="subcellular location">
    <subcellularLocation>
        <location evidence="1">Plastid</location>
        <location evidence="1">Chloroplast stroma</location>
    </subcellularLocation>
    <subcellularLocation>
        <location evidence="1">Plastid</location>
        <location evidence="1">Chloroplast thylakoid membrane</location>
        <topology evidence="1">Peripheral membrane protein</topology>
    </subcellularLocation>
    <text evidence="1">A minor fraction is associated with the chloroplast thylakoid membrane.</text>
</comment>
<comment type="similarity">
    <text evidence="1">Belongs to the SecA family.</text>
</comment>
<gene>
    <name evidence="1" type="primary">secA</name>
</gene>
<protein>
    <recommendedName>
        <fullName evidence="1">Protein translocase subunit SecA</fullName>
        <ecNumber evidence="1">7.4.2.8</ecNumber>
    </recommendedName>
</protein>
<name>SECA_TRICV</name>
<evidence type="ECO:0000255" key="1">
    <source>
        <dbReference type="HAMAP-Rule" id="MF_01382"/>
    </source>
</evidence>